<sequence>MARMYYDEDANLDLLAGKTIAIIGYGSQGHAHALNLKDSGVNVIVGLYPGSKSAIKAKEAGIPVYDVAEAAKIADWIMILLPDEVQKTIYLNEIAPNLSAGKVLSFAHGFNIHFGQVVPPANVDVVMVAPKGPGHLVRRTYEQGQGVPCLFAVYQDATGQARDRAMAYAKGIGGTRAGVLETTFREETETDLFGEQAVLCGGLSALIKAGFETLVEAGYQPELAYFECLHEVKLIVDLIVEGGLAKMRDSISNTAEYGDYTRGPRVVTEATKAEMRKILGEIQSGQFAREFVLENQAGKPGFTAMRRQEAEHSIEEVGQDLRAMMSWLKR</sequence>
<name>ILVC_MICAN</name>
<gene>
    <name evidence="1" type="primary">ilvC</name>
    <name type="ordered locus">MAE_09700</name>
</gene>
<protein>
    <recommendedName>
        <fullName evidence="1">Ketol-acid reductoisomerase (NADP(+))</fullName>
        <shortName evidence="1">KARI</shortName>
        <ecNumber evidence="1">1.1.1.86</ecNumber>
    </recommendedName>
    <alternativeName>
        <fullName evidence="1">Acetohydroxy-acid isomeroreductase</fullName>
        <shortName evidence="1">AHIR</shortName>
    </alternativeName>
    <alternativeName>
        <fullName evidence="1">Alpha-keto-beta-hydroxylacyl reductoisomerase</fullName>
    </alternativeName>
    <alternativeName>
        <fullName evidence="1">Ketol-acid reductoisomerase type 1</fullName>
    </alternativeName>
    <alternativeName>
        <fullName evidence="1">Ketol-acid reductoisomerase type I</fullName>
    </alternativeName>
</protein>
<dbReference type="EC" id="1.1.1.86" evidence="1"/>
<dbReference type="EMBL" id="AP009552">
    <property type="protein sequence ID" value="BAG00792.1"/>
    <property type="molecule type" value="Genomic_DNA"/>
</dbReference>
<dbReference type="RefSeq" id="WP_004163480.1">
    <property type="nucleotide sequence ID" value="NC_010296.1"/>
</dbReference>
<dbReference type="SMR" id="B0JRP2"/>
<dbReference type="STRING" id="449447.MAE_09700"/>
<dbReference type="PaxDb" id="449447-MAE_09700"/>
<dbReference type="EnsemblBacteria" id="BAG00792">
    <property type="protein sequence ID" value="BAG00792"/>
    <property type="gene ID" value="MAE_09700"/>
</dbReference>
<dbReference type="KEGG" id="mar:MAE_09700"/>
<dbReference type="eggNOG" id="COG0059">
    <property type="taxonomic scope" value="Bacteria"/>
</dbReference>
<dbReference type="HOGENOM" id="CLU_033821_0_1_3"/>
<dbReference type="BioCyc" id="MAER449447:MAE_RS04265-MONOMER"/>
<dbReference type="UniPathway" id="UPA00047">
    <property type="reaction ID" value="UER00056"/>
</dbReference>
<dbReference type="UniPathway" id="UPA00049">
    <property type="reaction ID" value="UER00060"/>
</dbReference>
<dbReference type="Proteomes" id="UP000001510">
    <property type="component" value="Chromosome"/>
</dbReference>
<dbReference type="GO" id="GO:0005829">
    <property type="term" value="C:cytosol"/>
    <property type="evidence" value="ECO:0007669"/>
    <property type="project" value="TreeGrafter"/>
</dbReference>
<dbReference type="GO" id="GO:0004455">
    <property type="term" value="F:ketol-acid reductoisomerase activity"/>
    <property type="evidence" value="ECO:0007669"/>
    <property type="project" value="UniProtKB-UniRule"/>
</dbReference>
<dbReference type="GO" id="GO:0000287">
    <property type="term" value="F:magnesium ion binding"/>
    <property type="evidence" value="ECO:0007669"/>
    <property type="project" value="UniProtKB-UniRule"/>
</dbReference>
<dbReference type="GO" id="GO:0050661">
    <property type="term" value="F:NADP binding"/>
    <property type="evidence" value="ECO:0007669"/>
    <property type="project" value="InterPro"/>
</dbReference>
<dbReference type="GO" id="GO:0009097">
    <property type="term" value="P:isoleucine biosynthetic process"/>
    <property type="evidence" value="ECO:0007669"/>
    <property type="project" value="UniProtKB-UniRule"/>
</dbReference>
<dbReference type="GO" id="GO:0009099">
    <property type="term" value="P:L-valine biosynthetic process"/>
    <property type="evidence" value="ECO:0007669"/>
    <property type="project" value="UniProtKB-UniRule"/>
</dbReference>
<dbReference type="FunFam" id="3.40.50.720:FF:000023">
    <property type="entry name" value="Ketol-acid reductoisomerase (NADP(+))"/>
    <property type="match status" value="1"/>
</dbReference>
<dbReference type="Gene3D" id="6.10.240.10">
    <property type="match status" value="1"/>
</dbReference>
<dbReference type="Gene3D" id="3.40.50.720">
    <property type="entry name" value="NAD(P)-binding Rossmann-like Domain"/>
    <property type="match status" value="1"/>
</dbReference>
<dbReference type="HAMAP" id="MF_00435">
    <property type="entry name" value="IlvC"/>
    <property type="match status" value="1"/>
</dbReference>
<dbReference type="InterPro" id="IPR008927">
    <property type="entry name" value="6-PGluconate_DH-like_C_sf"/>
</dbReference>
<dbReference type="InterPro" id="IPR013023">
    <property type="entry name" value="KARI"/>
</dbReference>
<dbReference type="InterPro" id="IPR000506">
    <property type="entry name" value="KARI_C"/>
</dbReference>
<dbReference type="InterPro" id="IPR013116">
    <property type="entry name" value="KARI_N"/>
</dbReference>
<dbReference type="InterPro" id="IPR014359">
    <property type="entry name" value="KARI_prok"/>
</dbReference>
<dbReference type="InterPro" id="IPR036291">
    <property type="entry name" value="NAD(P)-bd_dom_sf"/>
</dbReference>
<dbReference type="NCBIfam" id="TIGR00465">
    <property type="entry name" value="ilvC"/>
    <property type="match status" value="1"/>
</dbReference>
<dbReference type="NCBIfam" id="NF004017">
    <property type="entry name" value="PRK05479.1"/>
    <property type="match status" value="1"/>
</dbReference>
<dbReference type="NCBIfam" id="NF009940">
    <property type="entry name" value="PRK13403.1"/>
    <property type="match status" value="1"/>
</dbReference>
<dbReference type="PANTHER" id="PTHR21371">
    <property type="entry name" value="KETOL-ACID REDUCTOISOMERASE, MITOCHONDRIAL"/>
    <property type="match status" value="1"/>
</dbReference>
<dbReference type="PANTHER" id="PTHR21371:SF1">
    <property type="entry name" value="KETOL-ACID REDUCTOISOMERASE, MITOCHONDRIAL"/>
    <property type="match status" value="1"/>
</dbReference>
<dbReference type="Pfam" id="PF01450">
    <property type="entry name" value="KARI_C"/>
    <property type="match status" value="1"/>
</dbReference>
<dbReference type="Pfam" id="PF07991">
    <property type="entry name" value="KARI_N"/>
    <property type="match status" value="1"/>
</dbReference>
<dbReference type="PIRSF" id="PIRSF000116">
    <property type="entry name" value="IlvC_gammaproteo"/>
    <property type="match status" value="1"/>
</dbReference>
<dbReference type="SUPFAM" id="SSF48179">
    <property type="entry name" value="6-phosphogluconate dehydrogenase C-terminal domain-like"/>
    <property type="match status" value="1"/>
</dbReference>
<dbReference type="SUPFAM" id="SSF51735">
    <property type="entry name" value="NAD(P)-binding Rossmann-fold domains"/>
    <property type="match status" value="1"/>
</dbReference>
<dbReference type="PROSITE" id="PS51851">
    <property type="entry name" value="KARI_C"/>
    <property type="match status" value="1"/>
</dbReference>
<dbReference type="PROSITE" id="PS51850">
    <property type="entry name" value="KARI_N"/>
    <property type="match status" value="1"/>
</dbReference>
<organism>
    <name type="scientific">Microcystis aeruginosa (strain NIES-843 / IAM M-2473)</name>
    <dbReference type="NCBI Taxonomy" id="449447"/>
    <lineage>
        <taxon>Bacteria</taxon>
        <taxon>Bacillati</taxon>
        <taxon>Cyanobacteriota</taxon>
        <taxon>Cyanophyceae</taxon>
        <taxon>Oscillatoriophycideae</taxon>
        <taxon>Chroococcales</taxon>
        <taxon>Microcystaceae</taxon>
        <taxon>Microcystis</taxon>
    </lineage>
</organism>
<reference key="1">
    <citation type="journal article" date="2007" name="DNA Res.">
        <title>Complete genomic structure of the bloom-forming toxic cyanobacterium Microcystis aeruginosa NIES-843.</title>
        <authorList>
            <person name="Kaneko T."/>
            <person name="Nakajima N."/>
            <person name="Okamoto S."/>
            <person name="Suzuki I."/>
            <person name="Tanabe Y."/>
            <person name="Tamaoki M."/>
            <person name="Nakamura Y."/>
            <person name="Kasai F."/>
            <person name="Watanabe A."/>
            <person name="Kawashima K."/>
            <person name="Kishida Y."/>
            <person name="Ono A."/>
            <person name="Shimizu Y."/>
            <person name="Takahashi C."/>
            <person name="Minami C."/>
            <person name="Fujishiro T."/>
            <person name="Kohara M."/>
            <person name="Katoh M."/>
            <person name="Nakazaki N."/>
            <person name="Nakayama S."/>
            <person name="Yamada M."/>
            <person name="Tabata S."/>
            <person name="Watanabe M.M."/>
        </authorList>
    </citation>
    <scope>NUCLEOTIDE SEQUENCE [LARGE SCALE GENOMIC DNA]</scope>
    <source>
        <strain>NIES-843 / IAM M-247</strain>
    </source>
</reference>
<feature type="chain" id="PRO_1000080633" description="Ketol-acid reductoisomerase (NADP(+))">
    <location>
        <begin position="1"/>
        <end position="330"/>
    </location>
</feature>
<feature type="domain" description="KARI N-terminal Rossmann" evidence="2">
    <location>
        <begin position="2"/>
        <end position="182"/>
    </location>
</feature>
<feature type="domain" description="KARI C-terminal knotted" evidence="3">
    <location>
        <begin position="183"/>
        <end position="328"/>
    </location>
</feature>
<feature type="active site" evidence="1">
    <location>
        <position position="108"/>
    </location>
</feature>
<feature type="binding site" evidence="1">
    <location>
        <begin position="25"/>
        <end position="28"/>
    </location>
    <ligand>
        <name>NADP(+)</name>
        <dbReference type="ChEBI" id="CHEBI:58349"/>
    </ligand>
</feature>
<feature type="binding site" evidence="1">
    <location>
        <position position="51"/>
    </location>
    <ligand>
        <name>NADP(+)</name>
        <dbReference type="ChEBI" id="CHEBI:58349"/>
    </ligand>
</feature>
<feature type="binding site" evidence="1">
    <location>
        <position position="53"/>
    </location>
    <ligand>
        <name>NADP(+)</name>
        <dbReference type="ChEBI" id="CHEBI:58349"/>
    </ligand>
</feature>
<feature type="binding site" evidence="1">
    <location>
        <begin position="83"/>
        <end position="86"/>
    </location>
    <ligand>
        <name>NADP(+)</name>
        <dbReference type="ChEBI" id="CHEBI:58349"/>
    </ligand>
</feature>
<feature type="binding site" evidence="1">
    <location>
        <position position="134"/>
    </location>
    <ligand>
        <name>NADP(+)</name>
        <dbReference type="ChEBI" id="CHEBI:58349"/>
    </ligand>
</feature>
<feature type="binding site" evidence="1">
    <location>
        <position position="191"/>
    </location>
    <ligand>
        <name>Mg(2+)</name>
        <dbReference type="ChEBI" id="CHEBI:18420"/>
        <label>1</label>
    </ligand>
</feature>
<feature type="binding site" evidence="1">
    <location>
        <position position="191"/>
    </location>
    <ligand>
        <name>Mg(2+)</name>
        <dbReference type="ChEBI" id="CHEBI:18420"/>
        <label>2</label>
    </ligand>
</feature>
<feature type="binding site" evidence="1">
    <location>
        <position position="195"/>
    </location>
    <ligand>
        <name>Mg(2+)</name>
        <dbReference type="ChEBI" id="CHEBI:18420"/>
        <label>1</label>
    </ligand>
</feature>
<feature type="binding site" evidence="1">
    <location>
        <position position="227"/>
    </location>
    <ligand>
        <name>Mg(2+)</name>
        <dbReference type="ChEBI" id="CHEBI:18420"/>
        <label>2</label>
    </ligand>
</feature>
<feature type="binding site" evidence="1">
    <location>
        <position position="231"/>
    </location>
    <ligand>
        <name>Mg(2+)</name>
        <dbReference type="ChEBI" id="CHEBI:18420"/>
        <label>2</label>
    </ligand>
</feature>
<feature type="binding site" evidence="1">
    <location>
        <position position="252"/>
    </location>
    <ligand>
        <name>substrate</name>
    </ligand>
</feature>
<comment type="function">
    <text evidence="1">Involved in the biosynthesis of branched-chain amino acids (BCAA). Catalyzes an alkyl-migration followed by a ketol-acid reduction of (S)-2-acetolactate (S2AL) to yield (R)-2,3-dihydroxy-isovalerate. In the isomerase reaction, S2AL is rearranged via a Mg-dependent methyl migration to produce 3-hydroxy-3-methyl-2-ketobutyrate (HMKB). In the reductase reaction, this 2-ketoacid undergoes a metal-dependent reduction by NADPH to yield (R)-2,3-dihydroxy-isovalerate.</text>
</comment>
<comment type="catalytic activity">
    <reaction evidence="1">
        <text>(2R)-2,3-dihydroxy-3-methylbutanoate + NADP(+) = (2S)-2-acetolactate + NADPH + H(+)</text>
        <dbReference type="Rhea" id="RHEA:22068"/>
        <dbReference type="ChEBI" id="CHEBI:15378"/>
        <dbReference type="ChEBI" id="CHEBI:49072"/>
        <dbReference type="ChEBI" id="CHEBI:57783"/>
        <dbReference type="ChEBI" id="CHEBI:58349"/>
        <dbReference type="ChEBI" id="CHEBI:58476"/>
        <dbReference type="EC" id="1.1.1.86"/>
    </reaction>
</comment>
<comment type="catalytic activity">
    <reaction evidence="1">
        <text>(2R,3R)-2,3-dihydroxy-3-methylpentanoate + NADP(+) = (S)-2-ethyl-2-hydroxy-3-oxobutanoate + NADPH + H(+)</text>
        <dbReference type="Rhea" id="RHEA:13493"/>
        <dbReference type="ChEBI" id="CHEBI:15378"/>
        <dbReference type="ChEBI" id="CHEBI:49256"/>
        <dbReference type="ChEBI" id="CHEBI:49258"/>
        <dbReference type="ChEBI" id="CHEBI:57783"/>
        <dbReference type="ChEBI" id="CHEBI:58349"/>
        <dbReference type="EC" id="1.1.1.86"/>
    </reaction>
</comment>
<comment type="cofactor">
    <cofactor evidence="1">
        <name>Mg(2+)</name>
        <dbReference type="ChEBI" id="CHEBI:18420"/>
    </cofactor>
    <text evidence="1">Binds 2 magnesium ions per subunit.</text>
</comment>
<comment type="pathway">
    <text evidence="1">Amino-acid biosynthesis; L-isoleucine biosynthesis; L-isoleucine from 2-oxobutanoate: step 2/4.</text>
</comment>
<comment type="pathway">
    <text evidence="1">Amino-acid biosynthesis; L-valine biosynthesis; L-valine from pyruvate: step 2/4.</text>
</comment>
<comment type="similarity">
    <text evidence="1">Belongs to the ketol-acid reductoisomerase family.</text>
</comment>
<evidence type="ECO:0000255" key="1">
    <source>
        <dbReference type="HAMAP-Rule" id="MF_00435"/>
    </source>
</evidence>
<evidence type="ECO:0000255" key="2">
    <source>
        <dbReference type="PROSITE-ProRule" id="PRU01197"/>
    </source>
</evidence>
<evidence type="ECO:0000255" key="3">
    <source>
        <dbReference type="PROSITE-ProRule" id="PRU01198"/>
    </source>
</evidence>
<proteinExistence type="inferred from homology"/>
<accession>B0JRP2</accession>
<keyword id="KW-0028">Amino-acid biosynthesis</keyword>
<keyword id="KW-0100">Branched-chain amino acid biosynthesis</keyword>
<keyword id="KW-0460">Magnesium</keyword>
<keyword id="KW-0479">Metal-binding</keyword>
<keyword id="KW-0521">NADP</keyword>
<keyword id="KW-0560">Oxidoreductase</keyword>